<protein>
    <recommendedName>
        <fullName evidence="1">Beta-ketoacyl-[acyl-carrier-protein] synthase III</fullName>
        <shortName evidence="1">Beta-ketoacyl-ACP synthase III</shortName>
        <shortName evidence="1">KAS III</shortName>
        <ecNumber evidence="1 2 5 6 7">2.3.1.180</ecNumber>
    </recommendedName>
    <alternativeName>
        <fullName evidence="1">3-oxoacyl-[acyl-carrier-protein] synthase 3</fullName>
    </alternativeName>
    <alternativeName>
        <fullName evidence="1">3-oxoacyl-[acyl-carrier-protein] synthase III</fullName>
    </alternativeName>
    <alternativeName>
        <fullName>EcFabH</fullName>
    </alternativeName>
</protein>
<reference key="1">
    <citation type="journal article" date="1992" name="J. Biol. Chem.">
        <title>Isolation and characterization of the beta-ketoacyl-acyl carrier protein synthase III gene (fabH) from Escherichia coli K-12.</title>
        <authorList>
            <person name="Tsay J.-T."/>
            <person name="Oh W."/>
            <person name="Larson T.J."/>
            <person name="Jackowski S."/>
            <person name="Rock C.O."/>
        </authorList>
    </citation>
    <scope>NUCLEOTIDE SEQUENCE [GENOMIC DNA]</scope>
    <scope>PROTEIN SEQUENCE OF 1-30</scope>
    <source>
        <strain>K12</strain>
    </source>
</reference>
<reference key="2">
    <citation type="journal article" date="1997" name="Science">
        <title>The complete genome sequence of Escherichia coli K-12.</title>
        <authorList>
            <person name="Blattner F.R."/>
            <person name="Plunkett G. III"/>
            <person name="Bloch C.A."/>
            <person name="Perna N.T."/>
            <person name="Burland V."/>
            <person name="Riley M."/>
            <person name="Collado-Vides J."/>
            <person name="Glasner J.D."/>
            <person name="Rode C.K."/>
            <person name="Mayhew G.F."/>
            <person name="Gregor J."/>
            <person name="Davis N.W."/>
            <person name="Kirkpatrick H.A."/>
            <person name="Goeden M.A."/>
            <person name="Rose D.J."/>
            <person name="Mau B."/>
            <person name="Shao Y."/>
        </authorList>
    </citation>
    <scope>NUCLEOTIDE SEQUENCE [LARGE SCALE GENOMIC DNA]</scope>
    <source>
        <strain>K12 / MG1655 / ATCC 47076</strain>
    </source>
</reference>
<reference key="3">
    <citation type="journal article" date="2006" name="Mol. Syst. Biol.">
        <title>Highly accurate genome sequences of Escherichia coli K-12 strains MG1655 and W3110.</title>
        <authorList>
            <person name="Hayashi K."/>
            <person name="Morooka N."/>
            <person name="Yamamoto Y."/>
            <person name="Fujita K."/>
            <person name="Isono K."/>
            <person name="Choi S."/>
            <person name="Ohtsubo E."/>
            <person name="Baba T."/>
            <person name="Wanner B.L."/>
            <person name="Mori H."/>
            <person name="Horiuchi T."/>
        </authorList>
    </citation>
    <scope>NUCLEOTIDE SEQUENCE [LARGE SCALE GENOMIC DNA]</scope>
    <source>
        <strain>K12 / W3110 / ATCC 27325 / DSM 5911</strain>
    </source>
</reference>
<reference key="4">
    <citation type="journal article" date="1992" name="J. Bacteriol.">
        <title>Physical locations of genes in the rne (ams)-rpmF-plsX-fab region of the Escherichia coli K-12 chromosome.</title>
        <authorList>
            <person name="Oh W."/>
            <person name="Larson T.J."/>
        </authorList>
    </citation>
    <scope>NUCLEOTIDE SEQUENCE [GENOMIC DNA] OF 1-76</scope>
    <source>
        <strain>K12</strain>
    </source>
</reference>
<reference key="5">
    <citation type="journal article" date="1992" name="J. Bacteriol.">
        <title>Cloning, nucleotide sequence, and expression of the Escherichia coli fabD gene, encoding malonyl coenzyme A-acyl carrier protein transacylase.</title>
        <authorList>
            <person name="Verwoert I.I.G.S."/>
            <person name="Verbree E.C."/>
            <person name="van der Linden K.H."/>
            <person name="Nijkamp H.J."/>
            <person name="Stuitje A.R."/>
        </authorList>
    </citation>
    <scope>NUCLEOTIDE SEQUENCE [GENOMIC DNA] OF 147-317</scope>
</reference>
<reference key="6">
    <citation type="journal article" date="1992" name="FEBS Lett.">
        <title>Cloning and nucleotide sequence of the fabD gene encoding malonyl coenzyme A-acyl carrier protein transacylase of Escherichia coli.</title>
        <authorList>
            <person name="Magnuson K."/>
            <person name="Oh W."/>
            <person name="Larson T.J."/>
            <person name="Cronan J.E. Jr."/>
        </authorList>
    </citation>
    <scope>NUCLEOTIDE SEQUENCE [GENOMIC DNA] OF 201-317</scope>
    <source>
        <strain>K12</strain>
    </source>
</reference>
<reference key="7">
    <citation type="journal article" date="1996" name="DNA Res.">
        <title>A 718-kb DNA sequence of the Escherichia coli K-12 genome corresponding to the 12.7-28.0 min region on the linkage map.</title>
        <authorList>
            <person name="Oshima T."/>
            <person name="Aiba H."/>
            <person name="Baba T."/>
            <person name="Fujita K."/>
            <person name="Hayashi K."/>
            <person name="Honjo A."/>
            <person name="Ikemoto K."/>
            <person name="Inada T."/>
            <person name="Itoh T."/>
            <person name="Kajihara M."/>
            <person name="Kanai K."/>
            <person name="Kashimoto K."/>
            <person name="Kimura S."/>
            <person name="Kitagawa M."/>
            <person name="Makino K."/>
            <person name="Masuda S."/>
            <person name="Miki T."/>
            <person name="Mizobuchi K."/>
            <person name="Mori H."/>
            <person name="Motomura K."/>
            <person name="Nakamura Y."/>
            <person name="Nashimoto H."/>
            <person name="Nishio Y."/>
            <person name="Saito N."/>
            <person name="Sampei G."/>
            <person name="Seki Y."/>
            <person name="Tagami H."/>
            <person name="Takemoto K."/>
            <person name="Wada C."/>
            <person name="Yamamoto Y."/>
            <person name="Yano M."/>
            <person name="Horiuchi T."/>
        </authorList>
    </citation>
    <scope>NUCLEOTIDE SEQUENCE [GENOMIC DNA] OF 201-317</scope>
    <source>
        <strain>K12 / W3110 / ATCC 27325 / DSM 5911</strain>
    </source>
</reference>
<reference key="8">
    <citation type="journal article" date="1995" name="J. Biol. Chem.">
        <title>Enoyl-acyl carrier protein reductase (fabI) plays a determinant role in completing cycles of fatty acid elongation in Escherichia coli.</title>
        <authorList>
            <person name="Heath R.J."/>
            <person name="Rock C.O."/>
        </authorList>
    </citation>
    <scope>FUNCTION</scope>
    <scope>CATALYTIC ACTIVITY</scope>
</reference>
<reference key="9">
    <citation type="journal article" date="1996" name="J. Biol. Chem.">
        <title>Inhibition of beta-ketoacyl-acyl carrier protein synthase III (FabH) by acyl-acyl carrier protein in Escherichia coli.</title>
        <authorList>
            <person name="Heath R.J."/>
            <person name="Rock C.O."/>
        </authorList>
    </citation>
    <scope>FUNCTION</scope>
    <scope>CATALYTIC ACTIVITY</scope>
    <scope>BIOPHYSICOCHEMICAL PROPERTIES</scope>
    <scope>ACTIVITY REGULATION</scope>
</reference>
<reference key="10">
    <citation type="journal article" date="1996" name="J. Biol. Chem.">
        <title>Roles of the FabA and FabZ beta-hydroxyacyl-acyl carrier protein dehydratases in Escherichia coli fatty acid biosynthesis.</title>
        <authorList>
            <person name="Heath R.J."/>
            <person name="Rock C.O."/>
        </authorList>
    </citation>
    <scope>FUNCTION</scope>
    <scope>CATALYTIC ACTIVITY</scope>
</reference>
<reference key="11">
    <citation type="journal article" date="2000" name="J. Bacteriol.">
        <title>Beta-ketoacyl-acyl carrier protein synthase III (FabH) is a determining factor in branched-chain fatty acid biosynthesis.</title>
        <authorList>
            <person name="Choi K.-H."/>
            <person name="Heath R.J."/>
            <person name="Rock C.O."/>
        </authorList>
    </citation>
    <scope>FUNCTION</scope>
    <scope>CATALYTIC ACTIVITY</scope>
</reference>
<reference key="12">
    <citation type="journal article" date="2001" name="J. Biol. Chem.">
        <title>Identification and analysis of the acyl carrier protein (ACP) docking site on beta-ketoacyl-ACP synthase III.</title>
        <authorList>
            <person name="Zhang Y.-M."/>
            <person name="Rao M.S."/>
            <person name="Heath R.J."/>
            <person name="Price A.C."/>
            <person name="Olson A.J."/>
            <person name="Rock C.O."/>
            <person name="White S.W."/>
        </authorList>
    </citation>
    <scope>DOMAIN</scope>
    <scope>MUTAGENESIS OF LYS-214; ARG-249; ALA-253 AND 256-LYS-LYS-257</scope>
</reference>
<reference key="13">
    <citation type="journal article" date="2001" name="J. Biol. Chem.">
        <title>Identification, substrate specificity, and inhibition of the Streptococcus pneumoniae beta-ketoacyl-acyl carrier protein synthase III (FabH).</title>
        <authorList>
            <person name="Khandekar S.S."/>
            <person name="Gentry D.R."/>
            <person name="Van Aller G.S."/>
            <person name="Warren P."/>
            <person name="Xiang H."/>
            <person name="Silverman C."/>
            <person name="Doyle M.L."/>
            <person name="Chambers P.A."/>
            <person name="Konstantinidis A.K."/>
            <person name="Brandt M."/>
            <person name="Daines R.A."/>
            <person name="Lonsdale J.T."/>
        </authorList>
    </citation>
    <scope>INHIBITION BY ANTIBIOTICS</scope>
</reference>
<reference key="14">
    <citation type="journal article" date="1999" name="J. Biol. Chem.">
        <title>Crystal structure of beta-ketoacyl-acyl carrier protein synthase III. A key condensing enzyme in bacterial fatty acid biosynthesis.</title>
        <authorList>
            <person name="Qiu X."/>
            <person name="Janson C.A."/>
            <person name="Konstantinidis A.K."/>
            <person name="Nwagwu S."/>
            <person name="Silverman C."/>
            <person name="Smith W.W."/>
            <person name="Khandekar S."/>
            <person name="Lonsdale J."/>
            <person name="Abdel-Meguid S.S."/>
        </authorList>
    </citation>
    <scope>X-RAY CRYSTALLOGRAPHY (2.0 ANGSTROMS)</scope>
    <scope>ACTIVE SITE</scope>
</reference>
<reference key="15">
    <citation type="journal article" date="2000" name="Structure">
        <title>The 1.8-A crystal structure and active-site architecture of beta-ketoacyl-acyl carrier protein synthase III (FabH) from Escherichia coli.</title>
        <authorList>
            <person name="Davies C."/>
            <person name="Heath R.J."/>
            <person name="White S.W."/>
            <person name="Rock C.O."/>
        </authorList>
    </citation>
    <scope>X-RAY CRYSTALLOGRAPHY (1.8 ANGSTROMS)</scope>
    <scope>ACTIVE SITE</scope>
</reference>
<reference key="16">
    <citation type="journal article" date="2001" name="J. Mol. Biol.">
        <title>Refined structures of beta-ketoacyl-acyl carrier protein synthase III.</title>
        <authorList>
            <person name="Qiu X."/>
            <person name="Janson C.A."/>
            <person name="Smith W.W."/>
            <person name="Head M."/>
            <person name="Lonsdale J."/>
            <person name="Konstantinidis A.K."/>
        </authorList>
    </citation>
    <scope>X-RAY CRYSTALLOGRAPHY (1.9 ANGSTROMS)</scope>
    <scope>ACTIVE SITE</scope>
</reference>
<organism>
    <name type="scientific">Escherichia coli (strain K12)</name>
    <dbReference type="NCBI Taxonomy" id="83333"/>
    <lineage>
        <taxon>Bacteria</taxon>
        <taxon>Pseudomonadati</taxon>
        <taxon>Pseudomonadota</taxon>
        <taxon>Gammaproteobacteria</taxon>
        <taxon>Enterobacterales</taxon>
        <taxon>Enterobacteriaceae</taxon>
        <taxon>Escherichia</taxon>
    </lineage>
</organism>
<evidence type="ECO:0000255" key="1">
    <source>
        <dbReference type="HAMAP-Rule" id="MF_01815"/>
    </source>
</evidence>
<evidence type="ECO:0000269" key="2">
    <source>
    </source>
</evidence>
<evidence type="ECO:0000269" key="3">
    <source>
    </source>
</evidence>
<evidence type="ECO:0000269" key="4">
    <source>
    </source>
</evidence>
<evidence type="ECO:0000269" key="5">
    <source>
    </source>
</evidence>
<evidence type="ECO:0000269" key="6">
    <source>
    </source>
</evidence>
<evidence type="ECO:0000269" key="7">
    <source>
    </source>
</evidence>
<evidence type="ECO:0000303" key="8">
    <source>
    </source>
</evidence>
<evidence type="ECO:0000305" key="9"/>
<evidence type="ECO:0000305" key="10">
    <source>
    </source>
</evidence>
<evidence type="ECO:0000305" key="11">
    <source>
    </source>
</evidence>
<evidence type="ECO:0000305" key="12">
    <source>
    </source>
</evidence>
<evidence type="ECO:0007829" key="13">
    <source>
        <dbReference type="PDB" id="1EBL"/>
    </source>
</evidence>
<evidence type="ECO:0007829" key="14">
    <source>
        <dbReference type="PDB" id="4Z8D"/>
    </source>
</evidence>
<evidence type="ECO:0007829" key="15">
    <source>
        <dbReference type="PDB" id="8D1U"/>
    </source>
</evidence>
<sequence>MYTKIIGTGSYLPEQVRTNADLEKMVDTSDEWIVTRTGIRERHIAAPNETVSTMGFEAATRAIEMAGIEKDQIGLIVVATTSATHAFPSAACQIQSMLGIKGCPAFDVAAACAGFTYALSVADQYVKSGAVKYALVVGSDVLARTCDPTDRGTIIIFGDGAGAAVLAASEEPGIISTHLHADGSYGELLTLPNADRVNPENSIHLTMAGNEVFKVAVTELAHIVDETLAANNLDRSQLDWLVPHQANLRIISATAKKLGMSMDNVVVTLDRHGNTSAASVPCALDEAVRDGRIKPGQLVLLEAFGGGFTWGSALVRF</sequence>
<feature type="chain" id="PRO_0000110424" description="Beta-ketoacyl-[acyl-carrier-protein] synthase III">
    <location>
        <begin position="1"/>
        <end position="317"/>
    </location>
</feature>
<feature type="region of interest" description="ACP-binding" evidence="1">
    <location>
        <begin position="245"/>
        <end position="249"/>
    </location>
</feature>
<feature type="active site" evidence="1 10 11 12">
    <location>
        <position position="112"/>
    </location>
</feature>
<feature type="active site" evidence="1 10 11 12">
    <location>
        <position position="244"/>
    </location>
</feature>
<feature type="active site" evidence="1 10 11 12">
    <location>
        <position position="274"/>
    </location>
</feature>
<feature type="mutagenesis site" description="Loss of activity.">
    <original>C</original>
    <variation>S</variation>
    <location>
        <position position="112"/>
    </location>
</feature>
<feature type="mutagenesis site" description="Strongly reduces the binding to malonyl-ACP but not that of the substrate." evidence="3">
    <original>K</original>
    <variation>E</variation>
    <variation>A</variation>
    <location>
        <position position="214"/>
    </location>
</feature>
<feature type="mutagenesis site" description="Loss of activity.">
    <original>H</original>
    <variation>A</variation>
    <location>
        <position position="244"/>
    </location>
</feature>
<feature type="mutagenesis site" description="Abolishes the binding to malonyl-ACP but not that of the substrate." evidence="3">
    <original>R</original>
    <variation>E</variation>
    <variation>A</variation>
    <location>
        <position position="249"/>
    </location>
</feature>
<feature type="mutagenesis site" description="Abolishes both binding to malonyl-ACP and binding to substrate." evidence="3">
    <original>A</original>
    <variation>Y</variation>
    <location>
        <position position="253"/>
    </location>
</feature>
<feature type="mutagenesis site" description="Strongly reduces both binding to malonyl-ACP and binding to substrate." evidence="3">
    <original>KK</original>
    <variation>AA</variation>
    <location>
        <begin position="256"/>
        <end position="257"/>
    </location>
</feature>
<feature type="mutagenesis site" description="Abolishes the binding to malonyl-ACP but not that of the substrate." evidence="3">
    <original>KK</original>
    <variation>EE</variation>
    <location>
        <begin position="256"/>
        <end position="257"/>
    </location>
</feature>
<feature type="mutagenesis site" description="Loss of activity.">
    <original>N</original>
    <variation>A</variation>
    <location>
        <position position="274"/>
    </location>
</feature>
<feature type="strand" evidence="15">
    <location>
        <begin position="2"/>
        <end position="11"/>
    </location>
</feature>
<feature type="strand" evidence="15">
    <location>
        <begin position="14"/>
        <end position="18"/>
    </location>
</feature>
<feature type="helix" evidence="15">
    <location>
        <begin position="19"/>
        <end position="23"/>
    </location>
</feature>
<feature type="helix" evidence="15">
    <location>
        <begin position="30"/>
        <end position="37"/>
    </location>
</feature>
<feature type="strand" evidence="15">
    <location>
        <begin position="40"/>
        <end position="44"/>
    </location>
</feature>
<feature type="helix" evidence="15">
    <location>
        <begin position="51"/>
        <end position="66"/>
    </location>
</feature>
<feature type="helix" evidence="15">
    <location>
        <begin position="70"/>
        <end position="72"/>
    </location>
</feature>
<feature type="strand" evidence="15">
    <location>
        <begin position="75"/>
        <end position="79"/>
    </location>
</feature>
<feature type="strand" evidence="15">
    <location>
        <begin position="86"/>
        <end position="88"/>
    </location>
</feature>
<feature type="helix" evidence="15">
    <location>
        <begin position="90"/>
        <end position="98"/>
    </location>
</feature>
<feature type="strand" evidence="15">
    <location>
        <begin position="105"/>
        <end position="108"/>
    </location>
</feature>
<feature type="helix" evidence="15">
    <location>
        <begin position="111"/>
        <end position="113"/>
    </location>
</feature>
<feature type="helix" evidence="15">
    <location>
        <begin position="114"/>
        <end position="127"/>
    </location>
</feature>
<feature type="strand" evidence="15">
    <location>
        <begin position="132"/>
        <end position="140"/>
    </location>
</feature>
<feature type="helix" evidence="15">
    <location>
        <begin position="142"/>
        <end position="145"/>
    </location>
</feature>
<feature type="helix" evidence="15">
    <location>
        <begin position="151"/>
        <end position="154"/>
    </location>
</feature>
<feature type="strand" evidence="15">
    <location>
        <begin position="160"/>
        <end position="171"/>
    </location>
</feature>
<feature type="strand" evidence="15">
    <location>
        <begin position="173"/>
        <end position="181"/>
    </location>
</feature>
<feature type="helix" evidence="15">
    <location>
        <begin position="183"/>
        <end position="188"/>
    </location>
</feature>
<feature type="strand" evidence="13">
    <location>
        <begin position="189"/>
        <end position="192"/>
    </location>
</feature>
<feature type="strand" evidence="15">
    <location>
        <begin position="196"/>
        <end position="198"/>
    </location>
</feature>
<feature type="strand" evidence="14">
    <location>
        <begin position="204"/>
        <end position="207"/>
    </location>
</feature>
<feature type="helix" evidence="15">
    <location>
        <begin position="209"/>
        <end position="230"/>
    </location>
</feature>
<feature type="helix" evidence="15">
    <location>
        <begin position="235"/>
        <end position="237"/>
    </location>
</feature>
<feature type="strand" evidence="15">
    <location>
        <begin position="240"/>
        <end position="243"/>
    </location>
</feature>
<feature type="helix" evidence="15">
    <location>
        <begin position="248"/>
        <end position="257"/>
    </location>
</feature>
<feature type="helix" evidence="15">
    <location>
        <begin position="262"/>
        <end position="264"/>
    </location>
</feature>
<feature type="helix" evidence="15">
    <location>
        <begin position="269"/>
        <end position="272"/>
    </location>
</feature>
<feature type="helix" evidence="15">
    <location>
        <begin position="276"/>
        <end position="278"/>
    </location>
</feature>
<feature type="helix" evidence="15">
    <location>
        <begin position="279"/>
        <end position="289"/>
    </location>
</feature>
<feature type="strand" evidence="15">
    <location>
        <begin position="298"/>
        <end position="305"/>
    </location>
</feature>
<feature type="turn" evidence="15">
    <location>
        <begin position="306"/>
        <end position="308"/>
    </location>
</feature>
<feature type="strand" evidence="15">
    <location>
        <begin position="309"/>
        <end position="316"/>
    </location>
</feature>
<gene>
    <name evidence="8" type="primary">fabH</name>
    <name type="ordered locus">b1091</name>
    <name type="ordered locus">JW1077</name>
</gene>
<name>FABH_ECOLI</name>
<accession>P0A6R0</accession>
<accession>P24249</accession>
<keyword id="KW-0002">3D-structure</keyword>
<keyword id="KW-0012">Acyltransferase</keyword>
<keyword id="KW-0963">Cytoplasm</keyword>
<keyword id="KW-0903">Direct protein sequencing</keyword>
<keyword id="KW-0275">Fatty acid biosynthesis</keyword>
<keyword id="KW-0276">Fatty acid metabolism</keyword>
<keyword id="KW-0444">Lipid biosynthesis</keyword>
<keyword id="KW-0443">Lipid metabolism</keyword>
<keyword id="KW-0511">Multifunctional enzyme</keyword>
<keyword id="KW-1185">Reference proteome</keyword>
<keyword id="KW-0808">Transferase</keyword>
<comment type="function">
    <text evidence="2 5 6 7">Catalyzes the condensation reaction of fatty acid synthesis by the addition to an acyl acceptor of two carbons from malonyl-ACP. Catalyzes the first condensation reaction which initiates fatty acid synthesis and may therefore play a role in governing the total rate of fatty acid production. Possesses both acetoacetyl-ACP synthase and acetyl transacylase activities. Has some substrate specificity for acetyl-CoA. Its substrate specificity determines the biosynthesis of straight-chain of fatty acids instead of branched-chain (PubMed:10629181, PubMed:7592873, PubMed:8631920, PubMed:8910376). Can also use propionyl-CoA, with lower efficiency (PubMed:10629181, PubMed:8631920).</text>
</comment>
<comment type="catalytic activity">
    <reaction evidence="1 2 5 6 7">
        <text>malonyl-[ACP] + acetyl-CoA + H(+) = 3-oxobutanoyl-[ACP] + CO2 + CoA</text>
        <dbReference type="Rhea" id="RHEA:12080"/>
        <dbReference type="Rhea" id="RHEA-COMP:9623"/>
        <dbReference type="Rhea" id="RHEA-COMP:9625"/>
        <dbReference type="ChEBI" id="CHEBI:15378"/>
        <dbReference type="ChEBI" id="CHEBI:16526"/>
        <dbReference type="ChEBI" id="CHEBI:57287"/>
        <dbReference type="ChEBI" id="CHEBI:57288"/>
        <dbReference type="ChEBI" id="CHEBI:78449"/>
        <dbReference type="ChEBI" id="CHEBI:78450"/>
        <dbReference type="EC" id="2.3.1.180"/>
    </reaction>
    <physiologicalReaction direction="left-to-right" evidence="2 5 6 7">
        <dbReference type="Rhea" id="RHEA:12081"/>
    </physiologicalReaction>
</comment>
<comment type="catalytic activity">
    <reaction evidence="2 6">
        <text>malonyl-[ACP] + propanoyl-CoA + H(+) = 3-oxopentanoyl-[ACP] + CO2 + CoA</text>
        <dbReference type="Rhea" id="RHEA:42244"/>
        <dbReference type="Rhea" id="RHEA-COMP:9623"/>
        <dbReference type="Rhea" id="RHEA-COMP:9939"/>
        <dbReference type="ChEBI" id="CHEBI:15378"/>
        <dbReference type="ChEBI" id="CHEBI:16526"/>
        <dbReference type="ChEBI" id="CHEBI:57287"/>
        <dbReference type="ChEBI" id="CHEBI:57392"/>
        <dbReference type="ChEBI" id="CHEBI:78449"/>
        <dbReference type="ChEBI" id="CHEBI:78818"/>
    </reaction>
    <physiologicalReaction direction="left-to-right" evidence="2 6">
        <dbReference type="Rhea" id="RHEA:42245"/>
    </physiologicalReaction>
</comment>
<comment type="activity regulation">
    <text evidence="4 6">Negatively regulated by acyl-ACP, possibly by binding to either the free enzyme or the acyl-enzyme intermediate (PubMed:8631920). Inhibited by the SB418011 antibiotic (PubMed:11375394). Not inhibited by cerulenin, and weakly inhibited by thiolactomycin (PubMed:11375394).</text>
</comment>
<comment type="biophysicochemical properties">
    <kinetics>
        <KM evidence="6">40 uM for acetyl-CoA</KM>
        <KM evidence="6">5 uM for malonyl-[ACP]</KM>
    </kinetics>
</comment>
<comment type="pathway">
    <text evidence="1">Lipid metabolism; fatty acid biosynthesis.</text>
</comment>
<comment type="subunit">
    <text evidence="1">Homodimer.</text>
</comment>
<comment type="subcellular location">
    <subcellularLocation>
        <location evidence="1">Cytoplasm</location>
    </subcellularLocation>
</comment>
<comment type="domain">
    <text evidence="1 3">The last Arg residue of the ACP-binding site is essential for the weak association between ACP/AcpP and FabH.</text>
</comment>
<comment type="similarity">
    <text evidence="1 9">Belongs to the thiolase-like superfamily. FabH family.</text>
</comment>
<proteinExistence type="evidence at protein level"/>
<dbReference type="EC" id="2.3.1.180" evidence="1 2 5 6 7"/>
<dbReference type="EMBL" id="M77744">
    <property type="protein sequence ID" value="AAA23749.1"/>
    <property type="molecule type" value="Genomic_DNA"/>
</dbReference>
<dbReference type="EMBL" id="M96793">
    <property type="protein sequence ID" value="AAB59065.1"/>
    <property type="molecule type" value="Genomic_DNA"/>
</dbReference>
<dbReference type="EMBL" id="U00096">
    <property type="protein sequence ID" value="AAC74175.1"/>
    <property type="molecule type" value="Genomic_DNA"/>
</dbReference>
<dbReference type="EMBL" id="AP009048">
    <property type="protein sequence ID" value="BAA35899.2"/>
    <property type="molecule type" value="Genomic_DNA"/>
</dbReference>
<dbReference type="EMBL" id="M87040">
    <property type="protein sequence ID" value="AAA23741.1"/>
    <property type="molecule type" value="Genomic_DNA"/>
</dbReference>
<dbReference type="EMBL" id="Z11565">
    <property type="protein sequence ID" value="CAA77659.1"/>
    <property type="molecule type" value="Genomic_DNA"/>
</dbReference>
<dbReference type="PIR" id="A42431">
    <property type="entry name" value="A42431"/>
</dbReference>
<dbReference type="RefSeq" id="NP_415609.1">
    <property type="nucleotide sequence ID" value="NC_000913.3"/>
</dbReference>
<dbReference type="RefSeq" id="WP_000288132.1">
    <property type="nucleotide sequence ID" value="NZ_STEB01000016.1"/>
</dbReference>
<dbReference type="PDB" id="1EBL">
    <property type="method" value="X-ray"/>
    <property type="resolution" value="1.80 A"/>
    <property type="chains" value="A/B=1-317"/>
</dbReference>
<dbReference type="PDB" id="1HN9">
    <property type="method" value="X-ray"/>
    <property type="resolution" value="2.00 A"/>
    <property type="chains" value="A/B=1-317"/>
</dbReference>
<dbReference type="PDB" id="1HND">
    <property type="method" value="X-ray"/>
    <property type="resolution" value="1.60 A"/>
    <property type="chains" value="A=1-317"/>
</dbReference>
<dbReference type="PDB" id="1HNH">
    <property type="method" value="X-ray"/>
    <property type="resolution" value="1.90 A"/>
    <property type="chains" value="A=1-317"/>
</dbReference>
<dbReference type="PDB" id="1HNJ">
    <property type="method" value="X-ray"/>
    <property type="resolution" value="1.46 A"/>
    <property type="chains" value="A=1-317"/>
</dbReference>
<dbReference type="PDB" id="1HNK">
    <property type="method" value="X-ray"/>
    <property type="resolution" value="1.90 A"/>
    <property type="chains" value="A=1-317"/>
</dbReference>
<dbReference type="PDB" id="1MZS">
    <property type="method" value="X-ray"/>
    <property type="resolution" value="2.10 A"/>
    <property type="chains" value="A=1-317"/>
</dbReference>
<dbReference type="PDB" id="2EFT">
    <property type="method" value="X-ray"/>
    <property type="resolution" value="2.00 A"/>
    <property type="chains" value="A/B=1-317"/>
</dbReference>
<dbReference type="PDB" id="2GYO">
    <property type="method" value="X-ray"/>
    <property type="resolution" value="2.00 A"/>
    <property type="chains" value="A/B=1-317"/>
</dbReference>
<dbReference type="PDB" id="3IL9">
    <property type="method" value="X-ray"/>
    <property type="resolution" value="1.85 A"/>
    <property type="chains" value="A/B=1-317"/>
</dbReference>
<dbReference type="PDB" id="4Z8D">
    <property type="method" value="X-ray"/>
    <property type="resolution" value="2.00 A"/>
    <property type="chains" value="A/B=1-317"/>
</dbReference>
<dbReference type="PDB" id="5BNM">
    <property type="method" value="X-ray"/>
    <property type="resolution" value="1.70 A"/>
    <property type="chains" value="A/B=1-317"/>
</dbReference>
<dbReference type="PDB" id="5BNR">
    <property type="method" value="X-ray"/>
    <property type="resolution" value="1.89 A"/>
    <property type="chains" value="A=1-317"/>
</dbReference>
<dbReference type="PDB" id="5BNS">
    <property type="method" value="X-ray"/>
    <property type="resolution" value="2.20 A"/>
    <property type="chains" value="A/B=1-317"/>
</dbReference>
<dbReference type="PDB" id="6X7R">
    <property type="method" value="X-ray"/>
    <property type="resolution" value="1.35 A"/>
    <property type="chains" value="A=1-317"/>
</dbReference>
<dbReference type="PDB" id="8D1U">
    <property type="method" value="X-ray"/>
    <property type="resolution" value="1.30 A"/>
    <property type="chains" value="A=1-317"/>
</dbReference>
<dbReference type="PDBsum" id="1EBL"/>
<dbReference type="PDBsum" id="1HN9"/>
<dbReference type="PDBsum" id="1HND"/>
<dbReference type="PDBsum" id="1HNH"/>
<dbReference type="PDBsum" id="1HNJ"/>
<dbReference type="PDBsum" id="1HNK"/>
<dbReference type="PDBsum" id="1MZS"/>
<dbReference type="PDBsum" id="2EFT"/>
<dbReference type="PDBsum" id="2GYO"/>
<dbReference type="PDBsum" id="3IL9"/>
<dbReference type="PDBsum" id="4Z8D"/>
<dbReference type="PDBsum" id="5BNM"/>
<dbReference type="PDBsum" id="5BNR"/>
<dbReference type="PDBsum" id="5BNS"/>
<dbReference type="PDBsum" id="6X7R"/>
<dbReference type="PDBsum" id="8D1U"/>
<dbReference type="SMR" id="P0A6R0"/>
<dbReference type="BioGRID" id="4261031">
    <property type="interactions" value="470"/>
</dbReference>
<dbReference type="DIP" id="DIP-48255N"/>
<dbReference type="FunCoup" id="P0A6R0">
    <property type="interactions" value="666"/>
</dbReference>
<dbReference type="IntAct" id="P0A6R0">
    <property type="interactions" value="5"/>
</dbReference>
<dbReference type="STRING" id="511145.b1091"/>
<dbReference type="ChEMBL" id="CHEMBL4914"/>
<dbReference type="DrugBank" id="DB02316">
    <property type="generic name" value="1-(5-Carboxypentyl)-5-[(2,6-Dichlorobenzyl)Oxy]-1 H-Indole-2-Carboxylic Acid"/>
</dbReference>
<dbReference type="DrugBank" id="DB01034">
    <property type="generic name" value="Cerulenin"/>
</dbReference>
<dbReference type="DrugBank" id="DB01992">
    <property type="generic name" value="Coenzyme A"/>
</dbReference>
<dbReference type="DrugBank" id="DB03661">
    <property type="generic name" value="L-cysteic acid"/>
</dbReference>
<dbReference type="DrugBank" id="DB04524">
    <property type="generic name" value="Malonyl-CoA"/>
</dbReference>
<dbReference type="DrugBank" id="DB02039">
    <property type="generic name" value="S-Acetyl-Cysteine"/>
</dbReference>
<dbReference type="DrugCentral" id="P0A6R0"/>
<dbReference type="SwissLipids" id="SLP:000000852"/>
<dbReference type="CarbonylDB" id="P0A6R0"/>
<dbReference type="jPOST" id="P0A6R0"/>
<dbReference type="PaxDb" id="511145-b1091"/>
<dbReference type="EnsemblBacteria" id="AAC74175">
    <property type="protein sequence ID" value="AAC74175"/>
    <property type="gene ID" value="b1091"/>
</dbReference>
<dbReference type="GeneID" id="93776317"/>
<dbReference type="GeneID" id="946003"/>
<dbReference type="KEGG" id="ecj:JW1077"/>
<dbReference type="KEGG" id="eco:b1091"/>
<dbReference type="KEGG" id="ecoc:C3026_06600"/>
<dbReference type="PATRIC" id="fig|1411691.4.peg.1177"/>
<dbReference type="EchoBASE" id="EB0273"/>
<dbReference type="eggNOG" id="COG0332">
    <property type="taxonomic scope" value="Bacteria"/>
</dbReference>
<dbReference type="HOGENOM" id="CLU_039592_4_1_6"/>
<dbReference type="InParanoid" id="P0A6R0"/>
<dbReference type="OMA" id="WGSEGDK"/>
<dbReference type="OrthoDB" id="9815506at2"/>
<dbReference type="PhylomeDB" id="P0A6R0"/>
<dbReference type="BioCyc" id="EcoCyc:FABH-MONOMER"/>
<dbReference type="BioCyc" id="MetaCyc:FABH-MONOMER"/>
<dbReference type="BRENDA" id="2.3.1.180">
    <property type="organism ID" value="2026"/>
</dbReference>
<dbReference type="UniPathway" id="UPA00094"/>
<dbReference type="EvolutionaryTrace" id="P0A6R0"/>
<dbReference type="PRO" id="PR:P0A6R0"/>
<dbReference type="Proteomes" id="UP000000625">
    <property type="component" value="Chromosome"/>
</dbReference>
<dbReference type="GO" id="GO:0005829">
    <property type="term" value="C:cytosol"/>
    <property type="evidence" value="ECO:0000314"/>
    <property type="project" value="EcoCyc"/>
</dbReference>
<dbReference type="GO" id="GO:0004315">
    <property type="term" value="F:3-oxoacyl-[acyl-carrier-protein] synthase activity"/>
    <property type="evidence" value="ECO:0007669"/>
    <property type="project" value="InterPro"/>
</dbReference>
<dbReference type="GO" id="GO:0033818">
    <property type="term" value="F:beta-ketoacyl-acyl-carrier-protein synthase III activity"/>
    <property type="evidence" value="ECO:0000314"/>
    <property type="project" value="EcoCyc"/>
</dbReference>
<dbReference type="GO" id="GO:0006633">
    <property type="term" value="P:fatty acid biosynthetic process"/>
    <property type="evidence" value="ECO:0007669"/>
    <property type="project" value="UniProtKB-UniRule"/>
</dbReference>
<dbReference type="GO" id="GO:0006631">
    <property type="term" value="P:fatty acid metabolic process"/>
    <property type="evidence" value="ECO:0000315"/>
    <property type="project" value="CACAO"/>
</dbReference>
<dbReference type="CDD" id="cd00830">
    <property type="entry name" value="KAS_III"/>
    <property type="match status" value="1"/>
</dbReference>
<dbReference type="FunFam" id="3.40.47.10:FF:000004">
    <property type="entry name" value="3-oxoacyl-[acyl-carrier-protein] synthase 3"/>
    <property type="match status" value="1"/>
</dbReference>
<dbReference type="Gene3D" id="3.40.47.10">
    <property type="match status" value="1"/>
</dbReference>
<dbReference type="HAMAP" id="MF_01815">
    <property type="entry name" value="FabH"/>
    <property type="match status" value="1"/>
</dbReference>
<dbReference type="InterPro" id="IPR013747">
    <property type="entry name" value="ACP_syn_III_C"/>
</dbReference>
<dbReference type="InterPro" id="IPR013751">
    <property type="entry name" value="ACP_syn_III_N"/>
</dbReference>
<dbReference type="InterPro" id="IPR004655">
    <property type="entry name" value="FabH"/>
</dbReference>
<dbReference type="InterPro" id="IPR016039">
    <property type="entry name" value="Thiolase-like"/>
</dbReference>
<dbReference type="NCBIfam" id="TIGR00747">
    <property type="entry name" value="fabH"/>
    <property type="match status" value="1"/>
</dbReference>
<dbReference type="NCBIfam" id="NF006829">
    <property type="entry name" value="PRK09352.1"/>
    <property type="match status" value="1"/>
</dbReference>
<dbReference type="PANTHER" id="PTHR43091">
    <property type="entry name" value="3-OXOACYL-[ACYL-CARRIER-PROTEIN] SYNTHASE"/>
    <property type="match status" value="1"/>
</dbReference>
<dbReference type="PANTHER" id="PTHR43091:SF1">
    <property type="entry name" value="BETA-KETOACYL-[ACYL-CARRIER-PROTEIN] SYNTHASE III, CHLOROPLASTIC"/>
    <property type="match status" value="1"/>
</dbReference>
<dbReference type="Pfam" id="PF08545">
    <property type="entry name" value="ACP_syn_III"/>
    <property type="match status" value="1"/>
</dbReference>
<dbReference type="Pfam" id="PF08541">
    <property type="entry name" value="ACP_syn_III_C"/>
    <property type="match status" value="1"/>
</dbReference>
<dbReference type="SUPFAM" id="SSF53901">
    <property type="entry name" value="Thiolase-like"/>
    <property type="match status" value="1"/>
</dbReference>